<name>COBQ_HALHL</name>
<feature type="chain" id="PRO_1000002359" description="Cobyric acid synthase">
    <location>
        <begin position="1"/>
        <end position="483"/>
    </location>
</feature>
<feature type="domain" description="GATase cobBQ-type" evidence="1">
    <location>
        <begin position="252"/>
        <end position="430"/>
    </location>
</feature>
<feature type="active site" description="Nucleophile" evidence="1">
    <location>
        <position position="333"/>
    </location>
</feature>
<feature type="active site" evidence="1">
    <location>
        <position position="422"/>
    </location>
</feature>
<evidence type="ECO:0000255" key="1">
    <source>
        <dbReference type="HAMAP-Rule" id="MF_00028"/>
    </source>
</evidence>
<accession>A1WYA9</accession>
<reference key="1">
    <citation type="submission" date="2006-12" db="EMBL/GenBank/DDBJ databases">
        <title>Complete sequence of Halorhodospira halophila SL1.</title>
        <authorList>
            <consortium name="US DOE Joint Genome Institute"/>
            <person name="Copeland A."/>
            <person name="Lucas S."/>
            <person name="Lapidus A."/>
            <person name="Barry K."/>
            <person name="Detter J.C."/>
            <person name="Glavina del Rio T."/>
            <person name="Hammon N."/>
            <person name="Israni S."/>
            <person name="Dalin E."/>
            <person name="Tice H."/>
            <person name="Pitluck S."/>
            <person name="Saunders E."/>
            <person name="Brettin T."/>
            <person name="Bruce D."/>
            <person name="Han C."/>
            <person name="Tapia R."/>
            <person name="Schmutz J."/>
            <person name="Larimer F."/>
            <person name="Land M."/>
            <person name="Hauser L."/>
            <person name="Kyrpides N."/>
            <person name="Mikhailova N."/>
            <person name="Hoff W."/>
            <person name="Richardson P."/>
        </authorList>
    </citation>
    <scope>NUCLEOTIDE SEQUENCE [LARGE SCALE GENOMIC DNA]</scope>
    <source>
        <strain>DSM 244 / SL1</strain>
    </source>
</reference>
<proteinExistence type="inferred from homology"/>
<gene>
    <name evidence="1" type="primary">cobQ</name>
    <name type="ordered locus">Hhal_1907</name>
</gene>
<sequence>MVRARTLMLQGTCSGAGKTALVAGLCRLLARHGVRVAPFKPQNMSNNAAVTADGGEIGRGQWLQALAAGLPAHTDMNPVLLKPEAERTAQVVVQGHVTGRLEARAFREARQPLLPPVLESFQRLCAAYDVVLVEGAGSPAEPNLRQGDIANMGFAEAADVPVWLVGDIDRGGVFASLLGTLEWLDDADRRRVEALIINRFRGSPELLGEAPAQLEARGGVPVIGVVPAVPDLHLPEEDAPYRMAGPRGSGGALQVVAVAYPRMSNHDDLDALDAESGVHVRFARQPRELDGADLIVLPGSKHVFSDLAWLRESGMAEALYRHCRYGGRVVGLCGGLQMLGEGIEDPEGVEGGGSAPGLGLLPVHTRLAPTKQLAEVHGHAEWPAPVAVTGYEIHHGVTGAQEGLFPFVARSDDGRVLGSYLHRLFDSGPFRRALLVEWFALEGEGGDEQARIEAELDRLADTLEQALEPGWLKALGVPARPST</sequence>
<comment type="function">
    <text evidence="1">Catalyzes amidations at positions B, D, E, and G on adenosylcobyrinic A,C-diamide. NH(2) groups are provided by glutamine, and one molecule of ATP is hydrogenolyzed for each amidation.</text>
</comment>
<comment type="pathway">
    <text evidence="1">Cofactor biosynthesis; adenosylcobalamin biosynthesis.</text>
</comment>
<comment type="similarity">
    <text evidence="1">Belongs to the CobB/CobQ family. CobQ subfamily.</text>
</comment>
<protein>
    <recommendedName>
        <fullName evidence="1">Cobyric acid synthase</fullName>
    </recommendedName>
</protein>
<organism>
    <name type="scientific">Halorhodospira halophila (strain DSM 244 / SL1)</name>
    <name type="common">Ectothiorhodospira halophila (strain DSM 244 / SL1)</name>
    <dbReference type="NCBI Taxonomy" id="349124"/>
    <lineage>
        <taxon>Bacteria</taxon>
        <taxon>Pseudomonadati</taxon>
        <taxon>Pseudomonadota</taxon>
        <taxon>Gammaproteobacteria</taxon>
        <taxon>Chromatiales</taxon>
        <taxon>Ectothiorhodospiraceae</taxon>
        <taxon>Halorhodospira</taxon>
    </lineage>
</organism>
<keyword id="KW-0169">Cobalamin biosynthesis</keyword>
<keyword id="KW-0315">Glutamine amidotransferase</keyword>
<keyword id="KW-1185">Reference proteome</keyword>
<dbReference type="EMBL" id="CP000544">
    <property type="protein sequence ID" value="ABM62671.1"/>
    <property type="molecule type" value="Genomic_DNA"/>
</dbReference>
<dbReference type="SMR" id="A1WYA9"/>
<dbReference type="STRING" id="349124.Hhal_1907"/>
<dbReference type="KEGG" id="hha:Hhal_1907"/>
<dbReference type="eggNOG" id="COG1492">
    <property type="taxonomic scope" value="Bacteria"/>
</dbReference>
<dbReference type="HOGENOM" id="CLU_019250_2_2_6"/>
<dbReference type="OrthoDB" id="9808302at2"/>
<dbReference type="UniPathway" id="UPA00148"/>
<dbReference type="Proteomes" id="UP000000647">
    <property type="component" value="Chromosome"/>
</dbReference>
<dbReference type="GO" id="GO:0015420">
    <property type="term" value="F:ABC-type vitamin B12 transporter activity"/>
    <property type="evidence" value="ECO:0007669"/>
    <property type="project" value="UniProtKB-UniRule"/>
</dbReference>
<dbReference type="GO" id="GO:0003824">
    <property type="term" value="F:catalytic activity"/>
    <property type="evidence" value="ECO:0007669"/>
    <property type="project" value="InterPro"/>
</dbReference>
<dbReference type="GO" id="GO:0009236">
    <property type="term" value="P:cobalamin biosynthetic process"/>
    <property type="evidence" value="ECO:0007669"/>
    <property type="project" value="UniProtKB-UniRule"/>
</dbReference>
<dbReference type="CDD" id="cd05389">
    <property type="entry name" value="CobQ_N"/>
    <property type="match status" value="1"/>
</dbReference>
<dbReference type="CDD" id="cd01750">
    <property type="entry name" value="GATase1_CobQ"/>
    <property type="match status" value="1"/>
</dbReference>
<dbReference type="Gene3D" id="3.40.50.880">
    <property type="match status" value="1"/>
</dbReference>
<dbReference type="Gene3D" id="3.40.50.300">
    <property type="entry name" value="P-loop containing nucleotide triphosphate hydrolases"/>
    <property type="match status" value="1"/>
</dbReference>
<dbReference type="HAMAP" id="MF_00028">
    <property type="entry name" value="CobQ"/>
    <property type="match status" value="1"/>
</dbReference>
<dbReference type="InterPro" id="IPR029062">
    <property type="entry name" value="Class_I_gatase-like"/>
</dbReference>
<dbReference type="InterPro" id="IPR002586">
    <property type="entry name" value="CobQ/CobB/MinD/ParA_Nub-bd_dom"/>
</dbReference>
<dbReference type="InterPro" id="IPR033949">
    <property type="entry name" value="CobQ_GATase1"/>
</dbReference>
<dbReference type="InterPro" id="IPR047045">
    <property type="entry name" value="CobQ_N"/>
</dbReference>
<dbReference type="InterPro" id="IPR004459">
    <property type="entry name" value="CobQ_synth"/>
</dbReference>
<dbReference type="InterPro" id="IPR011698">
    <property type="entry name" value="GATase_3"/>
</dbReference>
<dbReference type="InterPro" id="IPR027417">
    <property type="entry name" value="P-loop_NTPase"/>
</dbReference>
<dbReference type="NCBIfam" id="TIGR00313">
    <property type="entry name" value="cobQ"/>
    <property type="match status" value="1"/>
</dbReference>
<dbReference type="NCBIfam" id="NF001989">
    <property type="entry name" value="PRK00784.1"/>
    <property type="match status" value="1"/>
</dbReference>
<dbReference type="PANTHER" id="PTHR21343:SF1">
    <property type="entry name" value="COBYRIC ACID SYNTHASE"/>
    <property type="match status" value="1"/>
</dbReference>
<dbReference type="PANTHER" id="PTHR21343">
    <property type="entry name" value="DETHIOBIOTIN SYNTHETASE"/>
    <property type="match status" value="1"/>
</dbReference>
<dbReference type="Pfam" id="PF01656">
    <property type="entry name" value="CbiA"/>
    <property type="match status" value="1"/>
</dbReference>
<dbReference type="Pfam" id="PF07685">
    <property type="entry name" value="GATase_3"/>
    <property type="match status" value="1"/>
</dbReference>
<dbReference type="SUPFAM" id="SSF52317">
    <property type="entry name" value="Class I glutamine amidotransferase-like"/>
    <property type="match status" value="1"/>
</dbReference>
<dbReference type="SUPFAM" id="SSF52540">
    <property type="entry name" value="P-loop containing nucleoside triphosphate hydrolases"/>
    <property type="match status" value="1"/>
</dbReference>
<dbReference type="PROSITE" id="PS51274">
    <property type="entry name" value="GATASE_COBBQ"/>
    <property type="match status" value="1"/>
</dbReference>